<protein>
    <recommendedName>
        <fullName evidence="2">Translation initiation factor IF-2</fullName>
    </recommendedName>
</protein>
<organism>
    <name type="scientific">Citrobacter koseri (strain ATCC BAA-895 / CDC 4225-83 / SGSC4696)</name>
    <dbReference type="NCBI Taxonomy" id="290338"/>
    <lineage>
        <taxon>Bacteria</taxon>
        <taxon>Pseudomonadati</taxon>
        <taxon>Pseudomonadota</taxon>
        <taxon>Gammaproteobacteria</taxon>
        <taxon>Enterobacterales</taxon>
        <taxon>Enterobacteriaceae</taxon>
        <taxon>Citrobacter</taxon>
    </lineage>
</organism>
<comment type="function">
    <text evidence="2">One of the essential components for the initiation of protein synthesis. Protects formylmethionyl-tRNA from spontaneous hydrolysis and promotes its binding to the 30S ribosomal subunits. Also involved in the hydrolysis of GTP during the formation of the 70S ribosomal complex.</text>
</comment>
<comment type="subcellular location">
    <subcellularLocation>
        <location evidence="2">Cytoplasm</location>
    </subcellularLocation>
</comment>
<comment type="similarity">
    <text evidence="2">Belongs to the TRAFAC class translation factor GTPase superfamily. Classic translation factor GTPase family. IF-2 subfamily.</text>
</comment>
<keyword id="KW-0963">Cytoplasm</keyword>
<keyword id="KW-0342">GTP-binding</keyword>
<keyword id="KW-0396">Initiation factor</keyword>
<keyword id="KW-0547">Nucleotide-binding</keyword>
<keyword id="KW-0648">Protein biosynthesis</keyword>
<keyword id="KW-1185">Reference proteome</keyword>
<reference key="1">
    <citation type="submission" date="2007-08" db="EMBL/GenBank/DDBJ databases">
        <authorList>
            <consortium name="The Citrobacter koseri Genome Sequencing Project"/>
            <person name="McClelland M."/>
            <person name="Sanderson E.K."/>
            <person name="Porwollik S."/>
            <person name="Spieth J."/>
            <person name="Clifton W.S."/>
            <person name="Latreille P."/>
            <person name="Courtney L."/>
            <person name="Wang C."/>
            <person name="Pepin K."/>
            <person name="Bhonagiri V."/>
            <person name="Nash W."/>
            <person name="Johnson M."/>
            <person name="Thiruvilangam P."/>
            <person name="Wilson R."/>
        </authorList>
    </citation>
    <scope>NUCLEOTIDE SEQUENCE [LARGE SCALE GENOMIC DNA]</scope>
    <source>
        <strain>ATCC BAA-895 / CDC 4225-83 / SGSC4696</strain>
    </source>
</reference>
<evidence type="ECO:0000250" key="1"/>
<evidence type="ECO:0000255" key="2">
    <source>
        <dbReference type="HAMAP-Rule" id="MF_00100"/>
    </source>
</evidence>
<evidence type="ECO:0000256" key="3">
    <source>
        <dbReference type="SAM" id="MobiDB-lite"/>
    </source>
</evidence>
<proteinExistence type="inferred from homology"/>
<sequence length="894" mass="97560">MTDVTVKALAAEIQTSVDRLVQQFADAGIPKSADDSVSAQEKQTLLAHLNRENGSGPDKLTLQRKTRSTLNIPGTGGKSKSVQIEVRKKRTFVKRDPQETERLAAEEQAQREAEEQARREAEETAKREAQQKADREAAEQAKRDAAEKAKREAAEKDKVSNQQTDDMTKTAQAEKARRENEAAELKRKAEEEARRKLEEEARRVAEEARRMAEENKWTDNAEPTEDTSDYHVTTSQHARQAEDENDREVEGGRGRSRNAKAARPAKKGNKHSESKADREEARAAVRGGKGGKNRKGSALQQSFQKPVQAVNRDVVIGETITVGELANKMAVKGSQVIKAMMKLGAMATINQVIDQETAQLVAEEMGHKVILRRENELEEAVMSDRDTGAAAEPRAPVVTIMGHVDHGKTSLLDYIRSTKVASGEAGGITQHIGAYHVETDNGMITFLDTPGHAAFTSMRARGAQATDIVVLVVAADDGVMPQTIEAIQHAKAAGVPVVVAVNKIDKPEADPDRVKNELSQYGILPEEWGGESQFVHVSAKAGTGIDELLDAILLQAEVLELKAVRKGMASGAVIESFLDKGRGPVATVLVREGTLNKGDIVLCGFEYGRVRAMRNELGQEVLEAGPSIPVEILGLSGVPAAGDEVTVVRDEKKAREVALYRQGKFREVKLARQQKSKLENMFANMTEGEVHEVNIVLKADVQGSVEAISDSLLKLSTDEVKVKIIGSGVGGITETDATLAAASNAILVGFNVRADASARKVIEAESLDLRYYSVIYNLIDEVKAAMSGMLSPELKQQIIGLAEVRDVFKSPKFGAVAGCMVTEGTIKRHNPIRVLRDNVVIYEGELESLRRFKDDVNEVRNGMECGIGVKNYNDVRVGDMIEVFEIIEIQRTIA</sequence>
<accession>A8AQ58</accession>
<name>IF2_CITK8</name>
<dbReference type="EMBL" id="CP000822">
    <property type="protein sequence ID" value="ABV15622.1"/>
    <property type="molecule type" value="Genomic_DNA"/>
</dbReference>
<dbReference type="RefSeq" id="WP_012135301.1">
    <property type="nucleotide sequence ID" value="NC_009792.1"/>
</dbReference>
<dbReference type="SMR" id="A8AQ58"/>
<dbReference type="STRING" id="290338.CKO_04569"/>
<dbReference type="GeneID" id="45138112"/>
<dbReference type="KEGG" id="cko:CKO_04569"/>
<dbReference type="HOGENOM" id="CLU_006301_6_3_6"/>
<dbReference type="OrthoDB" id="9811804at2"/>
<dbReference type="Proteomes" id="UP000008148">
    <property type="component" value="Chromosome"/>
</dbReference>
<dbReference type="GO" id="GO:0005829">
    <property type="term" value="C:cytosol"/>
    <property type="evidence" value="ECO:0007669"/>
    <property type="project" value="TreeGrafter"/>
</dbReference>
<dbReference type="GO" id="GO:0005525">
    <property type="term" value="F:GTP binding"/>
    <property type="evidence" value="ECO:0007669"/>
    <property type="project" value="UniProtKB-KW"/>
</dbReference>
<dbReference type="GO" id="GO:0003924">
    <property type="term" value="F:GTPase activity"/>
    <property type="evidence" value="ECO:0007669"/>
    <property type="project" value="UniProtKB-UniRule"/>
</dbReference>
<dbReference type="GO" id="GO:0097216">
    <property type="term" value="F:guanosine tetraphosphate binding"/>
    <property type="evidence" value="ECO:0007669"/>
    <property type="project" value="UniProtKB-ARBA"/>
</dbReference>
<dbReference type="GO" id="GO:0003743">
    <property type="term" value="F:translation initiation factor activity"/>
    <property type="evidence" value="ECO:0007669"/>
    <property type="project" value="UniProtKB-UniRule"/>
</dbReference>
<dbReference type="CDD" id="cd01887">
    <property type="entry name" value="IF2_eIF5B"/>
    <property type="match status" value="1"/>
</dbReference>
<dbReference type="CDD" id="cd03702">
    <property type="entry name" value="IF2_mtIF2_II"/>
    <property type="match status" value="1"/>
</dbReference>
<dbReference type="CDD" id="cd03692">
    <property type="entry name" value="mtIF2_IVc"/>
    <property type="match status" value="1"/>
</dbReference>
<dbReference type="FunFam" id="2.40.30.10:FF:000007">
    <property type="entry name" value="Translation initiation factor IF-2"/>
    <property type="match status" value="1"/>
</dbReference>
<dbReference type="FunFam" id="2.40.30.10:FF:000008">
    <property type="entry name" value="Translation initiation factor IF-2"/>
    <property type="match status" value="1"/>
</dbReference>
<dbReference type="FunFam" id="3.30.56.50:FF:000001">
    <property type="entry name" value="Translation initiation factor IF-2"/>
    <property type="match status" value="1"/>
</dbReference>
<dbReference type="FunFam" id="3.40.50.10050:FF:000001">
    <property type="entry name" value="Translation initiation factor IF-2"/>
    <property type="match status" value="1"/>
</dbReference>
<dbReference type="FunFam" id="3.40.50.300:FF:000019">
    <property type="entry name" value="Translation initiation factor IF-2"/>
    <property type="match status" value="1"/>
</dbReference>
<dbReference type="Gene3D" id="3.40.50.300">
    <property type="entry name" value="P-loop containing nucleotide triphosphate hydrolases"/>
    <property type="match status" value="1"/>
</dbReference>
<dbReference type="Gene3D" id="3.30.56.50">
    <property type="entry name" value="Putative DNA-binding domain, N-terminal subdomain of bacterial translation initiation factor IF2"/>
    <property type="match status" value="1"/>
</dbReference>
<dbReference type="Gene3D" id="2.40.30.10">
    <property type="entry name" value="Translation factors"/>
    <property type="match status" value="2"/>
</dbReference>
<dbReference type="Gene3D" id="3.40.50.10050">
    <property type="entry name" value="Translation initiation factor IF- 2, domain 3"/>
    <property type="match status" value="1"/>
</dbReference>
<dbReference type="HAMAP" id="MF_00100_B">
    <property type="entry name" value="IF_2_B"/>
    <property type="match status" value="1"/>
</dbReference>
<dbReference type="InterPro" id="IPR009061">
    <property type="entry name" value="DNA-bd_dom_put_sf"/>
</dbReference>
<dbReference type="InterPro" id="IPR053905">
    <property type="entry name" value="EF-G-like_DII"/>
</dbReference>
<dbReference type="InterPro" id="IPR004161">
    <property type="entry name" value="EFTu-like_2"/>
</dbReference>
<dbReference type="InterPro" id="IPR013575">
    <property type="entry name" value="IF2_assoc_dom_bac"/>
</dbReference>
<dbReference type="InterPro" id="IPR044145">
    <property type="entry name" value="IF2_II"/>
</dbReference>
<dbReference type="InterPro" id="IPR006847">
    <property type="entry name" value="IF2_N"/>
</dbReference>
<dbReference type="InterPro" id="IPR027417">
    <property type="entry name" value="P-loop_NTPase"/>
</dbReference>
<dbReference type="InterPro" id="IPR005225">
    <property type="entry name" value="Small_GTP-bd"/>
</dbReference>
<dbReference type="InterPro" id="IPR000795">
    <property type="entry name" value="T_Tr_GTP-bd_dom"/>
</dbReference>
<dbReference type="InterPro" id="IPR000178">
    <property type="entry name" value="TF_IF2_bacterial-like"/>
</dbReference>
<dbReference type="InterPro" id="IPR015760">
    <property type="entry name" value="TIF_IF2"/>
</dbReference>
<dbReference type="InterPro" id="IPR023115">
    <property type="entry name" value="TIF_IF2_dom3"/>
</dbReference>
<dbReference type="InterPro" id="IPR036925">
    <property type="entry name" value="TIF_IF2_dom3_sf"/>
</dbReference>
<dbReference type="InterPro" id="IPR009000">
    <property type="entry name" value="Transl_B-barrel_sf"/>
</dbReference>
<dbReference type="NCBIfam" id="TIGR00487">
    <property type="entry name" value="IF-2"/>
    <property type="match status" value="1"/>
</dbReference>
<dbReference type="NCBIfam" id="TIGR00231">
    <property type="entry name" value="small_GTP"/>
    <property type="match status" value="1"/>
</dbReference>
<dbReference type="PANTHER" id="PTHR43381:SF5">
    <property type="entry name" value="TR-TYPE G DOMAIN-CONTAINING PROTEIN"/>
    <property type="match status" value="1"/>
</dbReference>
<dbReference type="PANTHER" id="PTHR43381">
    <property type="entry name" value="TRANSLATION INITIATION FACTOR IF-2-RELATED"/>
    <property type="match status" value="1"/>
</dbReference>
<dbReference type="Pfam" id="PF22042">
    <property type="entry name" value="EF-G_D2"/>
    <property type="match status" value="1"/>
</dbReference>
<dbReference type="Pfam" id="PF00009">
    <property type="entry name" value="GTP_EFTU"/>
    <property type="match status" value="1"/>
</dbReference>
<dbReference type="Pfam" id="PF03144">
    <property type="entry name" value="GTP_EFTU_D2"/>
    <property type="match status" value="1"/>
</dbReference>
<dbReference type="Pfam" id="PF11987">
    <property type="entry name" value="IF-2"/>
    <property type="match status" value="1"/>
</dbReference>
<dbReference type="Pfam" id="PF08364">
    <property type="entry name" value="IF2_assoc"/>
    <property type="match status" value="1"/>
</dbReference>
<dbReference type="Pfam" id="PF04760">
    <property type="entry name" value="IF2_N"/>
    <property type="match status" value="2"/>
</dbReference>
<dbReference type="SUPFAM" id="SSF52156">
    <property type="entry name" value="Initiation factor IF2/eIF5b, domain 3"/>
    <property type="match status" value="1"/>
</dbReference>
<dbReference type="SUPFAM" id="SSF52540">
    <property type="entry name" value="P-loop containing nucleoside triphosphate hydrolases"/>
    <property type="match status" value="1"/>
</dbReference>
<dbReference type="SUPFAM" id="SSF46955">
    <property type="entry name" value="Putative DNA-binding domain"/>
    <property type="match status" value="1"/>
</dbReference>
<dbReference type="SUPFAM" id="SSF50447">
    <property type="entry name" value="Translation proteins"/>
    <property type="match status" value="2"/>
</dbReference>
<dbReference type="PROSITE" id="PS51722">
    <property type="entry name" value="G_TR_2"/>
    <property type="match status" value="1"/>
</dbReference>
<dbReference type="PROSITE" id="PS01176">
    <property type="entry name" value="IF2"/>
    <property type="match status" value="1"/>
</dbReference>
<gene>
    <name evidence="2" type="primary">infB</name>
    <name type="ordered locus">CKO_04569</name>
</gene>
<feature type="chain" id="PRO_1000008227" description="Translation initiation factor IF-2">
    <location>
        <begin position="1"/>
        <end position="894"/>
    </location>
</feature>
<feature type="domain" description="tr-type G">
    <location>
        <begin position="393"/>
        <end position="562"/>
    </location>
</feature>
<feature type="region of interest" description="Disordered" evidence="3">
    <location>
        <begin position="47"/>
        <end position="305"/>
    </location>
</feature>
<feature type="region of interest" description="G1" evidence="1">
    <location>
        <begin position="402"/>
        <end position="409"/>
    </location>
</feature>
<feature type="region of interest" description="G2" evidence="1">
    <location>
        <begin position="427"/>
        <end position="431"/>
    </location>
</feature>
<feature type="region of interest" description="G3" evidence="1">
    <location>
        <begin position="448"/>
        <end position="451"/>
    </location>
</feature>
<feature type="region of interest" description="G4" evidence="1">
    <location>
        <begin position="502"/>
        <end position="505"/>
    </location>
</feature>
<feature type="region of interest" description="G5" evidence="1">
    <location>
        <begin position="538"/>
        <end position="540"/>
    </location>
</feature>
<feature type="compositionally biased region" description="Polar residues" evidence="3">
    <location>
        <begin position="68"/>
        <end position="82"/>
    </location>
</feature>
<feature type="compositionally biased region" description="Basic and acidic residues" evidence="3">
    <location>
        <begin position="93"/>
        <end position="159"/>
    </location>
</feature>
<feature type="compositionally biased region" description="Basic and acidic residues" evidence="3">
    <location>
        <begin position="166"/>
        <end position="219"/>
    </location>
</feature>
<feature type="compositionally biased region" description="Basic residues" evidence="3">
    <location>
        <begin position="254"/>
        <end position="269"/>
    </location>
</feature>
<feature type="compositionally biased region" description="Basic and acidic residues" evidence="3">
    <location>
        <begin position="270"/>
        <end position="283"/>
    </location>
</feature>
<feature type="binding site" evidence="2">
    <location>
        <begin position="402"/>
        <end position="409"/>
    </location>
    <ligand>
        <name>GTP</name>
        <dbReference type="ChEBI" id="CHEBI:37565"/>
    </ligand>
</feature>
<feature type="binding site" evidence="2">
    <location>
        <begin position="448"/>
        <end position="452"/>
    </location>
    <ligand>
        <name>GTP</name>
        <dbReference type="ChEBI" id="CHEBI:37565"/>
    </ligand>
</feature>
<feature type="binding site" evidence="2">
    <location>
        <begin position="502"/>
        <end position="505"/>
    </location>
    <ligand>
        <name>GTP</name>
        <dbReference type="ChEBI" id="CHEBI:37565"/>
    </ligand>
</feature>